<evidence type="ECO:0000250" key="1">
    <source>
        <dbReference type="UniProtKB" id="P26662"/>
    </source>
</evidence>
<evidence type="ECO:0000250" key="2">
    <source>
        <dbReference type="UniProtKB" id="P26663"/>
    </source>
</evidence>
<evidence type="ECO:0000250" key="3">
    <source>
        <dbReference type="UniProtKB" id="P26664"/>
    </source>
</evidence>
<evidence type="ECO:0000250" key="4">
    <source>
        <dbReference type="UniProtKB" id="P27958"/>
    </source>
</evidence>
<evidence type="ECO:0000250" key="5">
    <source>
        <dbReference type="UniProtKB" id="P29846"/>
    </source>
</evidence>
<evidence type="ECO:0000250" key="6">
    <source>
        <dbReference type="UniProtKB" id="Q01403"/>
    </source>
</evidence>
<evidence type="ECO:0000250" key="7">
    <source>
        <dbReference type="UniProtKB" id="Q03463"/>
    </source>
</evidence>
<evidence type="ECO:0000250" key="8">
    <source>
        <dbReference type="UniProtKB" id="Q5EG65"/>
    </source>
</evidence>
<evidence type="ECO:0000250" key="9">
    <source>
        <dbReference type="UniProtKB" id="Q99IB8"/>
    </source>
</evidence>
<evidence type="ECO:0000250" key="10">
    <source>
        <dbReference type="UniProtKB" id="Q9WMX2"/>
    </source>
</evidence>
<evidence type="ECO:0000255" key="11"/>
<evidence type="ECO:0000305" key="12"/>
<reference key="1">
    <citation type="journal article" date="1991" name="Virology">
        <title>Variable and hypervariable domains are found in the regions of HCV corresponding to the flavivirus envelope and NS1 proteins and the pestivirus envelope glycoproteins.</title>
        <authorList>
            <person name="Weiner A.J."/>
            <person name="Brauer M.J."/>
            <person name="Rosenblatt J."/>
            <person name="Richman K.H."/>
            <person name="Tung J."/>
            <person name="Crawford K."/>
            <person name="Bonino F."/>
            <person name="Saracco G."/>
            <person name="Choo Q.-L."/>
            <person name="Houghton M."/>
            <person name="Han J.H."/>
        </authorList>
    </citation>
    <scope>NUCLEOTIDE SEQUENCE [GENOMIC RNA]</scope>
</reference>
<reference key="2">
    <citation type="journal article" date="2000" name="J. Viral Hepat.">
        <title>Properties of the hepatitis C virus core protein: a structural protein that modulates cellular processes.</title>
        <authorList>
            <person name="McLauchlan J."/>
        </authorList>
    </citation>
    <scope>REVIEW</scope>
</reference>
<reference key="3">
    <citation type="journal article" date="2004" name="Hepatology">
        <title>Structural biology of hepatitis C virus.</title>
        <authorList>
            <person name="Penin F."/>
            <person name="Dubuisson J."/>
            <person name="Rey F.A."/>
            <person name="Moradpour D."/>
            <person name="Pawlotsky J.-M."/>
        </authorList>
    </citation>
    <scope>REVIEW</scope>
</reference>
<organism>
    <name type="scientific">Hepatitis C virus (isolate HCT18)</name>
    <name type="common">HCV</name>
    <dbReference type="NCBI Taxonomy" id="11110"/>
    <lineage>
        <taxon>Viruses</taxon>
        <taxon>Riboviria</taxon>
        <taxon>Orthornavirae</taxon>
        <taxon>Kitrinoviricota</taxon>
        <taxon>Flasuviricetes</taxon>
        <taxon>Amarillovirales</taxon>
        <taxon>Flaviviridae</taxon>
        <taxon>Hepacivirus</taxon>
        <taxon>Hepacivirus hominis</taxon>
    </lineage>
</organism>
<dbReference type="EMBL" id="X53131">
    <property type="protein sequence ID" value="CAA37291.1"/>
    <property type="molecule type" value="Genomic_RNA"/>
</dbReference>
<dbReference type="BMRB" id="P27956"/>
<dbReference type="SMR" id="P27956"/>
<dbReference type="euHCVdb" id="X53131"/>
<dbReference type="GO" id="GO:0044167">
    <property type="term" value="C:host cell endoplasmic reticulum membrane"/>
    <property type="evidence" value="ECO:0007669"/>
    <property type="project" value="UniProtKB-SubCell"/>
</dbReference>
<dbReference type="GO" id="GO:0044186">
    <property type="term" value="C:host cell lipid droplet"/>
    <property type="evidence" value="ECO:0007669"/>
    <property type="project" value="UniProtKB-SubCell"/>
</dbReference>
<dbReference type="GO" id="GO:0044191">
    <property type="term" value="C:host cell mitochondrial membrane"/>
    <property type="evidence" value="ECO:0007669"/>
    <property type="project" value="UniProtKB-SubCell"/>
</dbReference>
<dbReference type="GO" id="GO:0042025">
    <property type="term" value="C:host cell nucleus"/>
    <property type="evidence" value="ECO:0007669"/>
    <property type="project" value="UniProtKB-SubCell"/>
</dbReference>
<dbReference type="GO" id="GO:0016020">
    <property type="term" value="C:membrane"/>
    <property type="evidence" value="ECO:0007669"/>
    <property type="project" value="UniProtKB-KW"/>
</dbReference>
<dbReference type="GO" id="GO:1990904">
    <property type="term" value="C:ribonucleoprotein complex"/>
    <property type="evidence" value="ECO:0007669"/>
    <property type="project" value="UniProtKB-KW"/>
</dbReference>
<dbReference type="GO" id="GO:0019031">
    <property type="term" value="C:viral envelope"/>
    <property type="evidence" value="ECO:0007669"/>
    <property type="project" value="UniProtKB-KW"/>
</dbReference>
<dbReference type="GO" id="GO:0019013">
    <property type="term" value="C:viral nucleocapsid"/>
    <property type="evidence" value="ECO:0007669"/>
    <property type="project" value="UniProtKB-KW"/>
</dbReference>
<dbReference type="GO" id="GO:0055036">
    <property type="term" value="C:virion membrane"/>
    <property type="evidence" value="ECO:0007669"/>
    <property type="project" value="UniProtKB-SubCell"/>
</dbReference>
<dbReference type="GO" id="GO:0003723">
    <property type="term" value="F:RNA binding"/>
    <property type="evidence" value="ECO:0007669"/>
    <property type="project" value="UniProtKB-KW"/>
</dbReference>
<dbReference type="GO" id="GO:0005198">
    <property type="term" value="F:structural molecule activity"/>
    <property type="evidence" value="ECO:0007669"/>
    <property type="project" value="InterPro"/>
</dbReference>
<dbReference type="GO" id="GO:0075512">
    <property type="term" value="P:clathrin-dependent endocytosis of virus by host cell"/>
    <property type="evidence" value="ECO:0007669"/>
    <property type="project" value="UniProtKB-KW"/>
</dbReference>
<dbReference type="GO" id="GO:0039654">
    <property type="term" value="P:fusion of virus membrane with host endosome membrane"/>
    <property type="evidence" value="ECO:0007669"/>
    <property type="project" value="UniProtKB-KW"/>
</dbReference>
<dbReference type="GO" id="GO:0052170">
    <property type="term" value="P:symbiont-mediated suppression of host innate immune response"/>
    <property type="evidence" value="ECO:0007669"/>
    <property type="project" value="UniProtKB-KW"/>
</dbReference>
<dbReference type="GO" id="GO:0019062">
    <property type="term" value="P:virion attachment to host cell"/>
    <property type="evidence" value="ECO:0007669"/>
    <property type="project" value="UniProtKB-KW"/>
</dbReference>
<dbReference type="FunFam" id="3.30.160.890:FF:000001">
    <property type="entry name" value="Genome polyprotein"/>
    <property type="match status" value="1"/>
</dbReference>
<dbReference type="Gene3D" id="3.30.160.890">
    <property type="entry name" value="Hepatitis C virus envelope glycoprotein E1, chain C"/>
    <property type="match status" value="1"/>
</dbReference>
<dbReference type="InterPro" id="IPR002521">
    <property type="entry name" value="HCV_Core_C"/>
</dbReference>
<dbReference type="InterPro" id="IPR002519">
    <property type="entry name" value="HCV_Env"/>
</dbReference>
<dbReference type="InterPro" id="IPR002531">
    <property type="entry name" value="HCV_NS1"/>
</dbReference>
<dbReference type="Pfam" id="PF01542">
    <property type="entry name" value="HCV_core"/>
    <property type="match status" value="1"/>
</dbReference>
<dbReference type="Pfam" id="PF01539">
    <property type="entry name" value="HCV_env"/>
    <property type="match status" value="1"/>
</dbReference>
<dbReference type="Pfam" id="PF01560">
    <property type="entry name" value="HCV_NS1"/>
    <property type="match status" value="1"/>
</dbReference>
<protein>
    <recommendedName>
        <fullName>Genome polyprotein</fullName>
    </recommendedName>
    <component>
        <recommendedName>
            <fullName>Core protein precursor</fullName>
        </recommendedName>
        <alternativeName>
            <fullName>Capsid protein C</fullName>
        </alternativeName>
        <alternativeName>
            <fullName>p23</fullName>
        </alternativeName>
    </component>
    <component>
        <recommendedName>
            <fullName>Mature core protein</fullName>
        </recommendedName>
        <alternativeName>
            <fullName>p21</fullName>
        </alternativeName>
    </component>
    <component>
        <recommendedName>
            <fullName>Envelope glycoprotein E1</fullName>
        </recommendedName>
        <alternativeName>
            <fullName>gp32</fullName>
        </alternativeName>
        <alternativeName>
            <fullName>gp35</fullName>
        </alternativeName>
    </component>
    <component>
        <recommendedName>
            <fullName>Envelope glycoprotein E2</fullName>
        </recommendedName>
        <alternativeName>
            <fullName>NS1</fullName>
        </alternativeName>
        <alternativeName>
            <fullName>gp68</fullName>
        </alternativeName>
        <alternativeName>
            <fullName>gp70</fullName>
        </alternativeName>
    </component>
</protein>
<sequence length="321" mass="34239">RNLGKVIDTLTCGFADLMGYIPLVGAPLGGAARALAHGVRVLEDGVNYATGNLPGCSFSIFLLALLSCLTVPASAHQVRNSTGLYHVTNDCPNSSIVYEAADAILHTPGCVPCVHEGNVSRCWVAVTPTVATRDGKLPTTQLRRHIDLLVGSATLCSALYVGDLCGSVFLVGQLFTFSPRRHWTTQGCNCSIYPGHITGHRMAWDMMMNWSPTAALVMAQLLRIPQAIMDMIAGAHWGVLAGIAYFSMVGNWAKVLVVLLLFAGVDAETYTSGGNAGHTMTGIVRFFAPGPKQNVHLINTNGSWHINSTALNCNDSLNTGW</sequence>
<accession>P27956</accession>
<comment type="function">
    <molecule>Mature core protein</molecule>
    <text evidence="1 3 4 5 9 12">Packages viral RNA to form a viral nucleocapsid, and promotes virion budding (Probable). Participates in the viral particle production as a result of its interaction with the non-structural protein 5A (By similarity). Binds RNA and may function as a RNA chaperone to induce the RNA structural rearrangements taking place during virus replication (By similarity). Modulates viral translation initiation by interacting with viral IRES and 40S ribosomal subunit (By similarity). Affects various cell signaling pathways, host immunity and lipid metabolism (Probable). Prevents the establishment of cellular antiviral state by blocking the interferon-alpha/beta (IFN-alpha/beta) and IFN-gamma signaling pathways and by blocking the formation of phosphorylated STAT1 and promoting ubiquitin-mediated proteasome-dependent degradation of STAT1 (By similarity). Activates STAT3 leading to cellular transformation (By similarity). Regulates the activity of cellular genes, including c-myc and c-fos (By similarity). May repress the promoter of p53, and sequester CREB3 and SP110 isoform 3/Sp110b in the cytoplasm (By similarity). Represses cell cycle negative regulating factor CDKN1A, thereby interrupting an important check point of normal cell cycle regulation (By similarity). Targets transcription factors involved in the regulation of inflammatory responses and in the immune response: suppresses TNF-induced NF-kappa-B activation, and activates AP-1 (By similarity). Binds to dendritic cells (DCs) via C1QR1, resulting in down-regulation of T-lymphocytes proliferation (By similarity). Alters lipid metabolism by interacting with hepatocellular proteins involved in lipid accumulation and storage (By similarity). Induces up-regulation of FAS promoter activity, and thereby contributes to the increased triglyceride accumulation in hepatocytes (steatosis) (By similarity).</text>
</comment>
<comment type="function">
    <molecule>Envelope glycoprotein E1</molecule>
    <text evidence="4">Forms a heterodimer with envelope glycoprotein E2, which mediates virus attachment to the host cell, virion internalization through clathrin-dependent endocytosis and fusion with host membrane (By similarity). Fusion with the host cell is most likely mediated by both E1 and E2, through conformational rearrangements of the heterodimer required for fusion rather than a classical class II fusion mechanism (By similarity). E1/E2 heterodimer binds host apolipoproteins such as APOB and ApoE thereby forming a lipo-viro-particle (LVP) (By similarity). APOE associated to the LVP allows the initial virus attachment to cell surface receptors such as the heparan sulfate proteoglycans (HSPGs), syndecan-1 (SDC1), syndecan-1 (SDC2), the low-density lipoprotein receptor (LDLR) and scavenger receptor class B type I (SCARB1) (By similarity). The cholesterol transfer activity of SCARB1 allows E2 exposure and binding of E2 to SCARB1 and the tetraspanin CD81 (By similarity). E1/E2 heterodimer binding on CD81 activates the epithelial growth factor receptor (EGFR) signaling pathway (By similarity). Diffusion of the complex E1-E2-EGFR-SCARB1-CD81 to the cell lateral membrane allows further interaction with Claudin 1 (CLDN1) and occludin (OCLN) to finally trigger HCV entry (By similarity).</text>
</comment>
<comment type="function">
    <molecule>Envelope glycoprotein E2</molecule>
    <text evidence="3 4">Forms a heterodimer with envelope glycoprotein E1, which mediates virus attachment to the host cell, virion internalization through clathrin-dependent endocytosis and fusion with host membrane (By similarity). Fusion with the host cell is most likely mediated by both E1 and E2, through conformational rearrangements of the heterodimer required for fusion rather than a classical class II fusion mechanism (By similarity). The interaction between envelope glycoprotein E2 and host apolipoprotein E/APOE allows the proper assembly, maturation and infectivity of the viral particles (By similarity). This interaction is probably promoted via the up-regulation of cellular autophagy by the virus (By similarity). E1/E2 heterodimer binds host apolipoproteins such as APOB and APOE thereby forming a lipo-viro-particle (LVP) (By similarity). APOE associated to the LVP allows the initial virus attachment to cell surface receptors such as the heparan sulfate proteoglycans (HSPGs), syndecan-1 (SDC1), syndecan-1 (SDC2), the low-density lipoprotein receptor (LDLR) and scavenger receptor class B type I (SCARB1) (By similarity). The cholesterol transfer activity of SCARB1 allows E2 exposure and binding of E2 to SCARB1 and the tetraspanin CD81 (By similarity). E1/E2 heterodimer binding on CD81 activates the epithelial growth factor receptor (EGFR) signaling pathway (By similarity). Diffusion of the complex E1-E2-EGFR-SCARB1-CD81 to the cell lateral membrane allows further interaction with Claudin 1 (CLDN1) and occludin (OCLN) to finally trigger HCV entry (By similarity). Inhibits host EIF2AK2/PKR activation, preventing the establishment of an antiviral state (By similarity). Viral ligand for CD209/DC-SIGN and CLEC4M/DC-SIGNR, which are respectively found on dendritic cells (DCs), and on liver sinusoidal endothelial cells and macrophage-like cells of lymph node sinuses (By similarity). These interactions allow the capture of circulating HCV particles by these cells and subsequent facilitated transmission to permissive cells such as hepatocytes and lymphocyte subpopulations (By similarity).</text>
</comment>
<comment type="subunit">
    <molecule>Mature core protein</molecule>
    <text evidence="1 3 4 5 7 8 9">Homooligomer (By similarity). Interacts with E1 (via C-terminus) (By similarity). Interacts with the non-structural protein 5A (By similarity). Interacts (via N-terminus) with host STAT1 (via SH2 domain); this interaction results in decreased STAT1 phosphorylation and ubiquitin-mediated proteasome-dependent STAT1 degradation, leading to decreased IFN-stimulated gene transcription (By similarity). Interacts with host STAT3; this interaction constitutively activates STAT3 (By similarity). Interacts with host LTBR receptor (By similarity). Interacts with host TNFRSF1A receptor and possibly induces apoptosis (By similarity). Interacts with host HNRPK (By similarity). Interacts with host YWHAE (By similarity). Interacts with host UBE3A/E6AP (By similarity). Interacts with host DDX3X (By similarity). Interacts with host APOA2 (By similarity). Interacts with host RXRA protein (By similarity). Interacts with host SP110 isoform 3/Sp110b; this interaction sequesters the transcriptional corepressor SP110 away from the nucleus (By similarity). Interacts with host CREB3 nuclear transcription protein; this interaction triggers cell transformation (By similarity). Interacts with host ACY3 (By similarity). Interacts with host C1QR1 (By similarity). Interacts with host RBM24; this interaction, which enhances the interaction of the mature core protein with 5'-UTR, may inhibit viral translation and favor replication (By similarity). Interacts with host EIF2AK2/PKR; this interaction induces the autophosphorylation of EIF2AK2 (By similarity). Part of the viral assembly initiation complex composed of NS2, E1, E2, NS3, NS4A, NS5A and the mature core protein (By similarity).</text>
</comment>
<comment type="subunit">
    <molecule>Envelope glycoprotein E1</molecule>
    <text evidence="4 9">Forms a heterodimer with envelope glycoprotein E2 (By similarity). Interacts with mature core protein (By similarity). Interacts with protease NS2 (By similarity). The heterodimer E1/E2 interacts with host CLDN1; this interaction plays a role in viral entry into host cell (By similarity). Interacts with host SPSB2 (via C-terminus) (By similarity). Part of the viral assembly initiation complex composed of NS2, E1, E2, NS3, NS4A, NS5A and the mature core protein (By similarity).</text>
</comment>
<comment type="subunit">
    <molecule>Envelope glycoprotein E2</molecule>
    <text evidence="4 9">Forms a heterodimer with envelope glycoprotein E1 (By similarity). Interacts with host CD81 and SCARB1 receptors; these interactions play a role in viral entry into host cell (By similarity). Interacts with host EIF2AK2/PKR; this interaction inhibits EIF2AK2 and probably allows the virus to evade the innate immune response (By similarity). Interacts with host CD209/DC-SIGN and CLEC4M/DC-SIGNR (By similarity). Interact with host SPCS1; this interaction is essential for viral particle assembly (By similarity). Interacts with protease NS2 (By similarity). The heterodimer E1/E2 interacts with host CLDN1; this interaction plays a role in viral entry into host cell (By similarity). Part of the viral assembly initiation complex composed of NS2, E1, E2, NS3, NS4A, NS5A and the mature core protein (By similarity).</text>
</comment>
<comment type="subcellular location">
    <molecule>Core protein precursor</molecule>
    <subcellularLocation>
        <location evidence="3">Host endoplasmic reticulum membrane</location>
        <topology evidence="11">Single-pass membrane protein</topology>
    </subcellularLocation>
    <subcellularLocation>
        <location evidence="3">Host mitochondrion membrane</location>
        <topology evidence="11">Single-pass type I membrane protein</topology>
    </subcellularLocation>
    <text>The C-terminal transmembrane domain of the core protein precursor contains an ER signal leading the nascent polyprotein to the ER membrane.</text>
</comment>
<comment type="subcellular location">
    <molecule>Mature core protein</molecule>
    <subcellularLocation>
        <location evidence="9">Virion</location>
    </subcellularLocation>
    <subcellularLocation>
        <location evidence="9">Host cytoplasm</location>
    </subcellularLocation>
    <subcellularLocation>
        <location evidence="1">Host nucleus</location>
    </subcellularLocation>
    <subcellularLocation>
        <location evidence="9">Host lipid droplet</location>
    </subcellularLocation>
    <text evidence="4">Only a minor proportion of core protein is present in the nucleus (By similarity). Probably present on the surface of lipid droplets (By similarity).</text>
</comment>
<comment type="subcellular location">
    <molecule>Envelope glycoprotein E1</molecule>
    <subcellularLocation>
        <location evidence="12">Virion membrane</location>
        <topology evidence="12">Single-pass type I membrane protein</topology>
    </subcellularLocation>
    <subcellularLocation>
        <location>Host endoplasmic reticulum membrane</location>
        <topology evidence="4">Single-pass type I membrane protein</topology>
    </subcellularLocation>
    <text evidence="4">The C-terminal transmembrane domain acts as a signal sequence and forms a hairpin structure before cleavage by host signal peptidase (By similarity). After cleavage, the membrane sequence is retained at the C-terminus of the protein, serving as ER membrane anchor (By similarity). A reorientation of the second hydrophobic stretch occurs after cleavage producing a single reoriented transmembrane domain (By similarity). These events explain the final topology of the protein (By similarity).</text>
</comment>
<comment type="subcellular location">
    <molecule>Envelope glycoprotein E2</molecule>
    <subcellularLocation>
        <location evidence="12">Virion membrane</location>
        <topology evidence="12">Single-pass type I membrane protein</topology>
    </subcellularLocation>
    <subcellularLocation>
        <location>Host endoplasmic reticulum membrane</location>
        <topology evidence="4">Single-pass type I membrane protein</topology>
    </subcellularLocation>
    <subcellularLocation>
        <location evidence="10">Host lipid droplet</location>
    </subcellularLocation>
    <text evidence="4">The C-terminal transmembrane domain acts as a signal sequence and forms a hairpin structure before cleavage by host signal peptidase (By similarity). After cleavage, the membrane sequence is retained at the C-terminus of the protein, serving as ER membrane anchor (By similarity). A reorientation of the second hydrophobic stretch occurs after cleavage producing a single reoriented transmembrane domain (By similarity). These events explain the final topology of the protein (By similarity).</text>
</comment>
<comment type="domain">
    <molecule>Envelope glycoprotein E1</molecule>
    <text evidence="4">The transmembrane regions of envelope E1 and E2 glycoproteins are involved in heterodimer formation, ER localization, and assembly of these proteins.</text>
</comment>
<comment type="domain">
    <molecule>Envelope glycoprotein E2</molecule>
    <text evidence="2 4">The transmembrane regions of envelope E1 and E2 glycoproteins are involved in heterodimer formation, ER localization, and assembly of these proteins (By similarity). Envelope E2 glycoprotein contain two highly variable regions called hypervariable region 1 and 2 (HVR1 and HVR2) (By similarity). E2 also contain two segments involved in CD81-binding (By similarity). HVR1 is implicated in the SCARB1-mediated cell entry and probably acts as a regulator of the association of particles with lipids (By similarity).</text>
</comment>
<comment type="PTM">
    <molecule>Genome polyprotein</molecule>
    <text evidence="3 4">Specific enzymatic cleavages in vivo yield mature proteins (By similarity). The structural proteins, core, E1, E2 and p7 are produced by proteolytic processing by host signal peptidases (By similarity). The core protein precursor is synthesized as a 23 kDa, which is retained in the ER membrane through the hydrophobic signal peptide (By similarity). Cleavage by the signal peptidase releases the 21 kDa mature core protein (By similarity). The cleavage of the core protein precursor occurs between aminoacids 176 and 188 but the exact cleavage site is not known (By similarity). Some degraded forms of the core protein appear as well during the course of infection (By similarity). The other proteins (p7, NS2, NS3, NS4A, NS4B, NS5A and NS5B) are cleaved by the viral proteases (By similarity). Autoprocessing between NS2 and NS3 is mediated by the NS2 cysteine protease catalytic domain and regulated by the NS3 N-terminal domain (By similarity).</text>
</comment>
<comment type="PTM">
    <molecule>Mature core protein</molecule>
    <text evidence="6">Phosphorylated by host PKC and PKA.</text>
</comment>
<comment type="PTM">
    <molecule>Mature core protein</molecule>
    <text evidence="7">Ubiquitinated; mediated by UBE3A and leading to core protein subsequent proteasomal degradation.</text>
</comment>
<comment type="PTM">
    <molecule>Envelope glycoprotein E1</molecule>
    <text evidence="4">Highly N-glycosylated.</text>
</comment>
<comment type="PTM">
    <molecule>Envelope glycoprotein E2</molecule>
    <text evidence="4">Highly N-glycosylated.</text>
</comment>
<comment type="miscellaneous">
    <text evidence="12">Viral particle assembly takes place at the surface of ER-derived membranes in close proximity to lipid droplets. NS2 associates with E1/E2 glycoproteins, NS3 and NS5A, which interacts with the viral RNA and core protein to promote genome encapsidation. The nucleocapsid buds at the ER membrane where E1/E2 glycoproteins are anchored and afterward associate with nascent lipid droplet to acquire APOE and APOC. Secretion of viral particles is probably regulated by viroporin p7.</text>
</comment>
<comment type="miscellaneous">
    <molecule>Mature core protein</molecule>
    <text evidence="1">Exerts viral interference on hepatitis B virus when HCV and HBV coinfect the same cell, by suppressing HBV gene expression, RNA encapsidation and budding.</text>
</comment>
<comment type="similarity">
    <text evidence="12">Belongs to the hepacivirus polyprotein family.</text>
</comment>
<comment type="caution">
    <text evidence="12">The core gene probably also codes for alternative reading frame proteins (ARFPs). Many functions depicted for the core protein might belong to the ARFPs.</text>
</comment>
<organismHost>
    <name type="scientific">Homo sapiens</name>
    <name type="common">Human</name>
    <dbReference type="NCBI Taxonomy" id="9606"/>
</organismHost>
<proteinExistence type="inferred from homology"/>
<feature type="chain" id="PRO_0000450906" description="Genome polyprotein">
    <location>
        <begin position="1" status="less than"/>
        <end position="321" status="greater than"/>
    </location>
</feature>
<feature type="chain" id="PRO_0000037588" description="Core protein precursor">
    <location>
        <begin position="1" status="less than"/>
        <end position="75"/>
    </location>
</feature>
<feature type="chain" id="PRO_0000037589" description="Mature core protein">
    <location>
        <begin position="1" status="less than"/>
        <end position="61"/>
    </location>
</feature>
<feature type="propeptide" id="PRO_0000037590" description="ER anchor for the core protein, removed in mature form by host signal peptidase">
    <location>
        <begin position="62"/>
        <end position="75"/>
    </location>
</feature>
<feature type="chain" id="PRO_0000037591" description="Envelope glycoprotein E1">
    <location>
        <begin position="76"/>
        <end position="267"/>
    </location>
</feature>
<feature type="chain" id="PRO_0000037592" description="Envelope glycoprotein E2">
    <location>
        <begin position="268"/>
        <end position="321" status="greater than"/>
    </location>
</feature>
<feature type="topological domain" description="Cytoplasmic" evidence="11">
    <location>
        <begin position="1" status="less than"/>
        <end position="52"/>
    </location>
</feature>
<feature type="transmembrane region" description="Helical" evidence="11">
    <location>
        <begin position="53"/>
        <end position="73"/>
    </location>
</feature>
<feature type="topological domain" description="Lumenal" evidence="11">
    <location>
        <begin position="74"/>
        <end position="242"/>
    </location>
</feature>
<feature type="transmembrane region" description="Helical" evidence="4">
    <location>
        <begin position="243"/>
        <end position="263"/>
    </location>
</feature>
<feature type="topological domain" description="Lumenal" evidence="4">
    <location>
        <begin position="264"/>
        <end position="321" status="greater than"/>
    </location>
</feature>
<feature type="region of interest" description="Interaction with APOA2" evidence="5">
    <location>
        <begin position="6"/>
        <end position="57"/>
    </location>
</feature>
<feature type="region of interest" description="Important for lipid droplets localization" evidence="4">
    <location>
        <begin position="48"/>
        <end position="51"/>
    </location>
</feature>
<feature type="region of interest" description="Important for fusion" evidence="4">
    <location>
        <begin position="149"/>
        <end position="180"/>
    </location>
</feature>
<feature type="region of interest" description="HVR1" evidence="4">
    <location>
        <begin position="268"/>
        <end position="294"/>
    </location>
</feature>
<feature type="site" description="Cleavage; by host signal peptide peptidase" evidence="1">
    <location>
        <begin position="61"/>
        <end position="62"/>
    </location>
</feature>
<feature type="site" description="Cleavage; by host signal peptidase" evidence="1">
    <location>
        <begin position="75"/>
        <end position="76"/>
    </location>
</feature>
<feature type="site" description="Cleavage; by host signal peptidase" evidence="1">
    <location>
        <begin position="267"/>
        <end position="268"/>
    </location>
</feature>
<feature type="glycosylation site" description="N-linked (GlcNAc...) asparagine; by host" evidence="4">
    <location>
        <position position="80"/>
    </location>
</feature>
<feature type="glycosylation site" description="N-linked (GlcNAc...) asparagine; by host" evidence="4">
    <location>
        <position position="93"/>
    </location>
</feature>
<feature type="glycosylation site" description="N-linked (GlcNAc...) asparagine; by host" evidence="4">
    <location>
        <position position="118"/>
    </location>
</feature>
<feature type="glycosylation site" description="N-linked (GlcNAc...) asparagine; by host" evidence="11">
    <location>
        <position position="189"/>
    </location>
</feature>
<feature type="glycosylation site" description="N-linked (GlcNAc...) (high mannose) asparagine; by host" evidence="4">
    <location>
        <position position="301"/>
    </location>
</feature>
<feature type="glycosylation site" description="N-linked (GlcNAc...) (high mannose) asparagine; by host" evidence="4">
    <location>
        <position position="307"/>
    </location>
</feature>
<feature type="glycosylation site" description="N-linked (GlcNAc...) (high mannose) asparagine; by host" evidence="4">
    <location>
        <position position="314"/>
    </location>
</feature>
<feature type="non-terminal residue">
    <location>
        <position position="1"/>
    </location>
</feature>
<feature type="non-terminal residue">
    <location>
        <position position="321"/>
    </location>
</feature>
<name>POLG_HCVH8</name>
<keyword id="KW-0053">Apoptosis</keyword>
<keyword id="KW-0167">Capsid protein</keyword>
<keyword id="KW-1165">Clathrin-mediated endocytosis of virus by host</keyword>
<keyword id="KW-1170">Fusion of virus membrane with host endosomal membrane</keyword>
<keyword id="KW-1168">Fusion of virus membrane with host membrane</keyword>
<keyword id="KW-0325">Glycoprotein</keyword>
<keyword id="KW-1035">Host cytoplasm</keyword>
<keyword id="KW-1038">Host endoplasmic reticulum</keyword>
<keyword id="KW-1041">Host lipid droplet</keyword>
<keyword id="KW-1043">Host membrane</keyword>
<keyword id="KW-1045">Host mitochondrion</keyword>
<keyword id="KW-1048">Host nucleus</keyword>
<keyword id="KW-0945">Host-virus interaction</keyword>
<keyword id="KW-1090">Inhibition of host innate immune response by virus</keyword>
<keyword id="KW-0922">Interferon antiviral system evasion</keyword>
<keyword id="KW-0472">Membrane</keyword>
<keyword id="KW-0553">Oncogene</keyword>
<keyword id="KW-0687">Ribonucleoprotein</keyword>
<keyword id="KW-0694">RNA-binding</keyword>
<keyword id="KW-0812">Transmembrane</keyword>
<keyword id="KW-1133">Transmembrane helix</keyword>
<keyword id="KW-0832">Ubl conjugation</keyword>
<keyword id="KW-1161">Viral attachment to host cell</keyword>
<keyword id="KW-0261">Viral envelope protein</keyword>
<keyword id="KW-0899">Viral immunoevasion</keyword>
<keyword id="KW-0543">Viral nucleoprotein</keyword>
<keyword id="KW-1162">Viral penetration into host cytoplasm</keyword>
<keyword id="KW-0946">Virion</keyword>
<keyword id="KW-1164">Virus endocytosis by host</keyword>
<keyword id="KW-1160">Virus entry into host cell</keyword>